<reference key="1">
    <citation type="journal article" date="2009" name="Environ. Microbiol.">
        <title>The genome of Polaromonas naphthalenivorans strain CJ2, isolated from coal tar-contaminated sediment, reveals physiological and metabolic versatility and evolution through extensive horizontal gene transfer.</title>
        <authorList>
            <person name="Yagi J.M."/>
            <person name="Sims D."/>
            <person name="Brettin T."/>
            <person name="Bruce D."/>
            <person name="Madsen E.L."/>
        </authorList>
    </citation>
    <scope>NUCLEOTIDE SEQUENCE [LARGE SCALE GENOMIC DNA]</scope>
    <source>
        <strain>CJ2</strain>
    </source>
</reference>
<gene>
    <name evidence="1" type="primary">purA</name>
    <name type="ordered locus">Pnap_1883</name>
</gene>
<name>PURA_POLNA</name>
<feature type="chain" id="PRO_0000321804" description="Adenylosuccinate synthetase">
    <location>
        <begin position="1"/>
        <end position="446"/>
    </location>
</feature>
<feature type="active site" description="Proton acceptor" evidence="1">
    <location>
        <position position="22"/>
    </location>
</feature>
<feature type="active site" description="Proton donor" evidence="1">
    <location>
        <position position="50"/>
    </location>
</feature>
<feature type="binding site" evidence="1">
    <location>
        <begin position="21"/>
        <end position="27"/>
    </location>
    <ligand>
        <name>GTP</name>
        <dbReference type="ChEBI" id="CHEBI:37565"/>
    </ligand>
</feature>
<feature type="binding site" description="in other chain" evidence="1">
    <location>
        <begin position="22"/>
        <end position="25"/>
    </location>
    <ligand>
        <name>IMP</name>
        <dbReference type="ChEBI" id="CHEBI:58053"/>
        <note>ligand shared between dimeric partners</note>
    </ligand>
</feature>
<feature type="binding site" evidence="1">
    <location>
        <position position="22"/>
    </location>
    <ligand>
        <name>Mg(2+)</name>
        <dbReference type="ChEBI" id="CHEBI:18420"/>
    </ligand>
</feature>
<feature type="binding site" description="in other chain" evidence="1">
    <location>
        <begin position="47"/>
        <end position="50"/>
    </location>
    <ligand>
        <name>IMP</name>
        <dbReference type="ChEBI" id="CHEBI:58053"/>
        <note>ligand shared between dimeric partners</note>
    </ligand>
</feature>
<feature type="binding site" evidence="1">
    <location>
        <begin position="49"/>
        <end position="51"/>
    </location>
    <ligand>
        <name>GTP</name>
        <dbReference type="ChEBI" id="CHEBI:37565"/>
    </ligand>
</feature>
<feature type="binding site" evidence="1">
    <location>
        <position position="49"/>
    </location>
    <ligand>
        <name>Mg(2+)</name>
        <dbReference type="ChEBI" id="CHEBI:18420"/>
    </ligand>
</feature>
<feature type="binding site" description="in other chain" evidence="1">
    <location>
        <position position="141"/>
    </location>
    <ligand>
        <name>IMP</name>
        <dbReference type="ChEBI" id="CHEBI:58053"/>
        <note>ligand shared between dimeric partners</note>
    </ligand>
</feature>
<feature type="binding site" evidence="1">
    <location>
        <position position="155"/>
    </location>
    <ligand>
        <name>IMP</name>
        <dbReference type="ChEBI" id="CHEBI:58053"/>
        <note>ligand shared between dimeric partners</note>
    </ligand>
</feature>
<feature type="binding site" description="in other chain" evidence="1">
    <location>
        <position position="236"/>
    </location>
    <ligand>
        <name>IMP</name>
        <dbReference type="ChEBI" id="CHEBI:58053"/>
        <note>ligand shared between dimeric partners</note>
    </ligand>
</feature>
<feature type="binding site" description="in other chain" evidence="1">
    <location>
        <position position="251"/>
    </location>
    <ligand>
        <name>IMP</name>
        <dbReference type="ChEBI" id="CHEBI:58053"/>
        <note>ligand shared between dimeric partners</note>
    </ligand>
</feature>
<feature type="binding site" evidence="1">
    <location>
        <begin position="315"/>
        <end position="321"/>
    </location>
    <ligand>
        <name>substrate</name>
    </ligand>
</feature>
<feature type="binding site" description="in other chain" evidence="1">
    <location>
        <position position="319"/>
    </location>
    <ligand>
        <name>IMP</name>
        <dbReference type="ChEBI" id="CHEBI:58053"/>
        <note>ligand shared between dimeric partners</note>
    </ligand>
</feature>
<feature type="binding site" evidence="1">
    <location>
        <position position="321"/>
    </location>
    <ligand>
        <name>GTP</name>
        <dbReference type="ChEBI" id="CHEBI:37565"/>
    </ligand>
</feature>
<feature type="binding site" evidence="1">
    <location>
        <begin position="347"/>
        <end position="349"/>
    </location>
    <ligand>
        <name>GTP</name>
        <dbReference type="ChEBI" id="CHEBI:37565"/>
    </ligand>
</feature>
<feature type="binding site" evidence="1">
    <location>
        <begin position="429"/>
        <end position="431"/>
    </location>
    <ligand>
        <name>GTP</name>
        <dbReference type="ChEBI" id="CHEBI:37565"/>
    </ligand>
</feature>
<organism>
    <name type="scientific">Polaromonas naphthalenivorans (strain CJ2)</name>
    <dbReference type="NCBI Taxonomy" id="365044"/>
    <lineage>
        <taxon>Bacteria</taxon>
        <taxon>Pseudomonadati</taxon>
        <taxon>Pseudomonadota</taxon>
        <taxon>Betaproteobacteria</taxon>
        <taxon>Burkholderiales</taxon>
        <taxon>Comamonadaceae</taxon>
        <taxon>Polaromonas</taxon>
    </lineage>
</organism>
<protein>
    <recommendedName>
        <fullName evidence="1">Adenylosuccinate synthetase</fullName>
        <shortName evidence="1">AMPSase</shortName>
        <shortName evidence="1">AdSS</shortName>
        <ecNumber evidence="1">6.3.4.4</ecNumber>
    </recommendedName>
    <alternativeName>
        <fullName evidence="1">IMP--aspartate ligase</fullName>
    </alternativeName>
</protein>
<evidence type="ECO:0000255" key="1">
    <source>
        <dbReference type="HAMAP-Rule" id="MF_00011"/>
    </source>
</evidence>
<proteinExistence type="inferred from homology"/>
<keyword id="KW-0963">Cytoplasm</keyword>
<keyword id="KW-0342">GTP-binding</keyword>
<keyword id="KW-0436">Ligase</keyword>
<keyword id="KW-0460">Magnesium</keyword>
<keyword id="KW-0479">Metal-binding</keyword>
<keyword id="KW-0547">Nucleotide-binding</keyword>
<keyword id="KW-0658">Purine biosynthesis</keyword>
<keyword id="KW-1185">Reference proteome</keyword>
<sequence>MTNKPSAATGRNVVVVGTQWGDEGKGKLVDWLTEMSQGVVRFQGGHNAGHTLVINGVKTALHLIPSGIMRPGVKCYIGNGVVLSAAKLFEEIEGLEKAGVEVRSRLRISEACPLILPFHAAIDIARETFREKGGTEKIGTTGRGIGPAYEDKIARRALRVQDLKYPERFAAKLRELLELHNFVLTGFLNAPAVDFDTVYNEAMLHAELLKPMMADVSRELNDAHQAGANLLFEGAQGTLLDVDHGTYPYVTSSNCVAGNAAAGAGVGPGMLHYILGITKAYCTRVGGGPFPTELDWENPGTVGYHLSSVGAEKGVTTGRSRRCGWFDAALLKRSAQVNGLSGLCITKLDVLDGIEELKLCTGYELDGQTTDILPMGADDIARCVPIYETMPGWSQTTVGVTEYDKLPAAAQRYLQRIEEVTGVPVHMISTSPDRDHTILLRNPYAA</sequence>
<accession>A1VNG5</accession>
<comment type="function">
    <text evidence="1">Plays an important role in the de novo pathway of purine nucleotide biosynthesis. Catalyzes the first committed step in the biosynthesis of AMP from IMP.</text>
</comment>
<comment type="catalytic activity">
    <reaction evidence="1">
        <text>IMP + L-aspartate + GTP = N(6)-(1,2-dicarboxyethyl)-AMP + GDP + phosphate + 2 H(+)</text>
        <dbReference type="Rhea" id="RHEA:15753"/>
        <dbReference type="ChEBI" id="CHEBI:15378"/>
        <dbReference type="ChEBI" id="CHEBI:29991"/>
        <dbReference type="ChEBI" id="CHEBI:37565"/>
        <dbReference type="ChEBI" id="CHEBI:43474"/>
        <dbReference type="ChEBI" id="CHEBI:57567"/>
        <dbReference type="ChEBI" id="CHEBI:58053"/>
        <dbReference type="ChEBI" id="CHEBI:58189"/>
        <dbReference type="EC" id="6.3.4.4"/>
    </reaction>
</comment>
<comment type="cofactor">
    <cofactor evidence="1">
        <name>Mg(2+)</name>
        <dbReference type="ChEBI" id="CHEBI:18420"/>
    </cofactor>
    <text evidence="1">Binds 1 Mg(2+) ion per subunit.</text>
</comment>
<comment type="pathway">
    <text evidence="1">Purine metabolism; AMP biosynthesis via de novo pathway; AMP from IMP: step 1/2.</text>
</comment>
<comment type="subunit">
    <text evidence="1">Homodimer.</text>
</comment>
<comment type="subcellular location">
    <subcellularLocation>
        <location evidence="1">Cytoplasm</location>
    </subcellularLocation>
</comment>
<comment type="similarity">
    <text evidence="1">Belongs to the adenylosuccinate synthetase family.</text>
</comment>
<dbReference type="EC" id="6.3.4.4" evidence="1"/>
<dbReference type="EMBL" id="CP000529">
    <property type="protein sequence ID" value="ABM37193.1"/>
    <property type="molecule type" value="Genomic_DNA"/>
</dbReference>
<dbReference type="RefSeq" id="WP_011801274.1">
    <property type="nucleotide sequence ID" value="NC_008781.1"/>
</dbReference>
<dbReference type="SMR" id="A1VNG5"/>
<dbReference type="STRING" id="365044.Pnap_1883"/>
<dbReference type="KEGG" id="pna:Pnap_1883"/>
<dbReference type="eggNOG" id="COG0104">
    <property type="taxonomic scope" value="Bacteria"/>
</dbReference>
<dbReference type="HOGENOM" id="CLU_029848_0_0_4"/>
<dbReference type="OrthoDB" id="9807553at2"/>
<dbReference type="UniPathway" id="UPA00075">
    <property type="reaction ID" value="UER00335"/>
</dbReference>
<dbReference type="Proteomes" id="UP000000644">
    <property type="component" value="Chromosome"/>
</dbReference>
<dbReference type="GO" id="GO:0005737">
    <property type="term" value="C:cytoplasm"/>
    <property type="evidence" value="ECO:0007669"/>
    <property type="project" value="UniProtKB-SubCell"/>
</dbReference>
<dbReference type="GO" id="GO:0004019">
    <property type="term" value="F:adenylosuccinate synthase activity"/>
    <property type="evidence" value="ECO:0007669"/>
    <property type="project" value="UniProtKB-UniRule"/>
</dbReference>
<dbReference type="GO" id="GO:0005525">
    <property type="term" value="F:GTP binding"/>
    <property type="evidence" value="ECO:0007669"/>
    <property type="project" value="UniProtKB-UniRule"/>
</dbReference>
<dbReference type="GO" id="GO:0000287">
    <property type="term" value="F:magnesium ion binding"/>
    <property type="evidence" value="ECO:0007669"/>
    <property type="project" value="UniProtKB-UniRule"/>
</dbReference>
<dbReference type="GO" id="GO:0044208">
    <property type="term" value="P:'de novo' AMP biosynthetic process"/>
    <property type="evidence" value="ECO:0007669"/>
    <property type="project" value="UniProtKB-UniRule"/>
</dbReference>
<dbReference type="GO" id="GO:0046040">
    <property type="term" value="P:IMP metabolic process"/>
    <property type="evidence" value="ECO:0007669"/>
    <property type="project" value="TreeGrafter"/>
</dbReference>
<dbReference type="CDD" id="cd03108">
    <property type="entry name" value="AdSS"/>
    <property type="match status" value="1"/>
</dbReference>
<dbReference type="FunFam" id="1.10.300.10:FF:000001">
    <property type="entry name" value="Adenylosuccinate synthetase"/>
    <property type="match status" value="1"/>
</dbReference>
<dbReference type="FunFam" id="3.90.170.10:FF:000001">
    <property type="entry name" value="Adenylosuccinate synthetase"/>
    <property type="match status" value="1"/>
</dbReference>
<dbReference type="Gene3D" id="3.40.440.10">
    <property type="entry name" value="Adenylosuccinate Synthetase, subunit A, domain 1"/>
    <property type="match status" value="1"/>
</dbReference>
<dbReference type="Gene3D" id="1.10.300.10">
    <property type="entry name" value="Adenylosuccinate Synthetase, subunit A, domain 2"/>
    <property type="match status" value="1"/>
</dbReference>
<dbReference type="Gene3D" id="3.90.170.10">
    <property type="entry name" value="Adenylosuccinate Synthetase, subunit A, domain 3"/>
    <property type="match status" value="1"/>
</dbReference>
<dbReference type="HAMAP" id="MF_00011">
    <property type="entry name" value="Adenylosucc_synth"/>
    <property type="match status" value="1"/>
</dbReference>
<dbReference type="InterPro" id="IPR018220">
    <property type="entry name" value="Adenylosuccin_syn_GTP-bd"/>
</dbReference>
<dbReference type="InterPro" id="IPR033128">
    <property type="entry name" value="Adenylosuccin_syn_Lys_AS"/>
</dbReference>
<dbReference type="InterPro" id="IPR042109">
    <property type="entry name" value="Adenylosuccinate_synth_dom1"/>
</dbReference>
<dbReference type="InterPro" id="IPR042110">
    <property type="entry name" value="Adenylosuccinate_synth_dom2"/>
</dbReference>
<dbReference type="InterPro" id="IPR042111">
    <property type="entry name" value="Adenylosuccinate_synth_dom3"/>
</dbReference>
<dbReference type="InterPro" id="IPR001114">
    <property type="entry name" value="Adenylosuccinate_synthetase"/>
</dbReference>
<dbReference type="InterPro" id="IPR027417">
    <property type="entry name" value="P-loop_NTPase"/>
</dbReference>
<dbReference type="NCBIfam" id="NF002223">
    <property type="entry name" value="PRK01117.1"/>
    <property type="match status" value="1"/>
</dbReference>
<dbReference type="NCBIfam" id="TIGR00184">
    <property type="entry name" value="purA"/>
    <property type="match status" value="1"/>
</dbReference>
<dbReference type="PANTHER" id="PTHR11846">
    <property type="entry name" value="ADENYLOSUCCINATE SYNTHETASE"/>
    <property type="match status" value="1"/>
</dbReference>
<dbReference type="PANTHER" id="PTHR11846:SF0">
    <property type="entry name" value="ADENYLOSUCCINATE SYNTHETASE"/>
    <property type="match status" value="1"/>
</dbReference>
<dbReference type="Pfam" id="PF00709">
    <property type="entry name" value="Adenylsucc_synt"/>
    <property type="match status" value="1"/>
</dbReference>
<dbReference type="SMART" id="SM00788">
    <property type="entry name" value="Adenylsucc_synt"/>
    <property type="match status" value="1"/>
</dbReference>
<dbReference type="SUPFAM" id="SSF52540">
    <property type="entry name" value="P-loop containing nucleoside triphosphate hydrolases"/>
    <property type="match status" value="1"/>
</dbReference>
<dbReference type="PROSITE" id="PS01266">
    <property type="entry name" value="ADENYLOSUCCIN_SYN_1"/>
    <property type="match status" value="1"/>
</dbReference>
<dbReference type="PROSITE" id="PS00513">
    <property type="entry name" value="ADENYLOSUCCIN_SYN_2"/>
    <property type="match status" value="1"/>
</dbReference>